<sequence length="1440" mass="162122">MGARASVLSGGKLDAWEKIRLRPGGKKKYRLKHLVWASRELERFALNPGLLETGEGCQQIMEQLQSTLKTGSEEIKSLYNTVATLYCVHQRIDVKDTKEALDKIEEIQNKSRQKTQQAAAAQQAAAATKNSSSVSQNYPIVQNAQGQMIHQAISPRTLNAWVKVIEEKAFSPEVIPMFSALSEGATPQDLNMMLNIVGGHQAAMQMLKDTINEEAADWDRVHPVHAGPIPPGQMREPRGSDIAGTTSTLQEQIGWMTSNPPIPVGDIYKRWIILGLNKIVRMYSPVSILDIRQGPKEPFRDYVDRFFKTLRAEQATQEVKNWMTETLLVQNANPDCKTILKALGPGATLEEMMTACQGVGGPSHKARVLAEAMSQATNSTAAIMMQRGNFKGQKRIKCFNCGKEGHLARNCRAPRKKGCWKCGKEGHQMKDCTERQANFLRENLAFPQGKAREFPSEQTRANSPTSRELRVWGGDKTLSETGAERQGIVSFSFPQITLWQRPVVTVRVGGQLKEALLDTGADDTVLEEINLPGKWKPKMIGGIGGFIKVRQYDQILIEICGKKAIGTILVGPTPVNIIGRNMLTQIGCTLNFPISPIETVPVKLKPGMDGPRVKQWPLTEEKIKALTEICKDMEKEGKILKIGPENPYNTPVFAIKKKDSTKWRKLVNFRELNKRTQDFWEVQLGIPHPAGLKKKKSVTVLDVGDAYFSVPLDEDFRKYTAFTIPSINNETPGIRYQYNVLPQGWKGSPAIFQSSMTKILEPFRTKNPEIVIYQYMDDLYVGSDLEIGQHRTKIEELREHLLKWGFTTPDKKHQKEPPFLWMGYELHPDKWTVQPIQLPDKESWTVNDIQKLVGKLNWASQIYPGIKVKQLCKLLRGAKALTDIVPLTAEAELELAENREILKEPVHGVYYDPSKDLIAEIQKQGQGQWTYQIYQEQYKNLKTGKYARIKSAHTNDVKQLTEAVQKIAQESIVIWGKTPKFRLPIQKETWEAWWTEYWQATWIPEWEFVNTPPLVKLWYQLETEPIVGAETFYVDGAANRETKKGKAGYVTDRGRQKVVSLTETTNQKTELQAIHLALQDSGSEVNIVTDSQYALGIIQAQPDKSESEIVNQIIEQLIQKDKVYLSWVPAHKGIGGNEQVDKLVSSGIRKVLFLDGIDKAQEEHEKYHSNWRAMASDFNLPPIVAKEIVASCDKCQLKGEAMHGQVDCSPGIWQLDCTHLEGKIIIVAVHVASGYIEAEVIPAETGQETAYFILKLAGRWPVKVVHTDNGSNFTSAAVKAACWWANIKQEFGIPYNPQSQGVVESMNKELKKIIGQVREQAEHLKTAVQMAVFIHNFKRKGGIGGYSAGERIIDMIATDIQTKELQKQITKIQNFRVYYRDNRDPIWKGPAKLLWKGEGAVVIQDNSDIKVVPRRKAKIIRDYGKQMAGDDCVAGGQDED</sequence>
<dbReference type="EC" id="3.4.23.16"/>
<dbReference type="EC" id="2.7.7.49"/>
<dbReference type="EC" id="2.7.7.7"/>
<dbReference type="EC" id="3.1.26.13"/>
<dbReference type="EC" id="3.1.13.2"/>
<dbReference type="EC" id="2.7.7.-" evidence="5"/>
<dbReference type="EC" id="3.1.-.-" evidence="5"/>
<dbReference type="EMBL" id="X04415">
    <property type="protein sequence ID" value="CAA28012.1"/>
    <property type="status" value="ALT_SEQ"/>
    <property type="molecule type" value="Genomic_RNA"/>
</dbReference>
<dbReference type="PIR" id="T01668">
    <property type="entry name" value="T01668"/>
</dbReference>
<dbReference type="PDB" id="1HHJ">
    <property type="method" value="X-ray"/>
    <property type="resolution" value="2.50 A"/>
    <property type="chains" value="C/F=901-909"/>
</dbReference>
<dbReference type="PDB" id="3IXO">
    <property type="method" value="X-ray"/>
    <property type="resolution" value="1.70 A"/>
    <property type="chains" value="A/B=494-592"/>
</dbReference>
<dbReference type="PDB" id="8T4E">
    <property type="method" value="EM"/>
    <property type="resolution" value="3.50 A"/>
    <property type="chains" value="C=901-909"/>
</dbReference>
<dbReference type="PDBsum" id="1HHJ"/>
<dbReference type="PDBsum" id="3IXO"/>
<dbReference type="PDBsum" id="8T4E"/>
<dbReference type="EMDB" id="EMD-41028"/>
<dbReference type="SMR" id="P04588"/>
<dbReference type="MEROPS" id="A02.001"/>
<dbReference type="EvolutionaryTrace" id="P04588"/>
<dbReference type="PRO" id="PR:P04588"/>
<dbReference type="Proteomes" id="UP000007696">
    <property type="component" value="Genome"/>
</dbReference>
<dbReference type="GO" id="GO:0043657">
    <property type="term" value="C:host cell"/>
    <property type="evidence" value="ECO:0007669"/>
    <property type="project" value="GOC"/>
</dbReference>
<dbReference type="GO" id="GO:0042025">
    <property type="term" value="C:host cell nucleus"/>
    <property type="evidence" value="ECO:0007669"/>
    <property type="project" value="UniProtKB-SubCell"/>
</dbReference>
<dbReference type="GO" id="GO:0020002">
    <property type="term" value="C:host cell plasma membrane"/>
    <property type="evidence" value="ECO:0007669"/>
    <property type="project" value="UniProtKB-SubCell"/>
</dbReference>
<dbReference type="GO" id="GO:0072494">
    <property type="term" value="C:host multivesicular body"/>
    <property type="evidence" value="ECO:0007669"/>
    <property type="project" value="UniProtKB-SubCell"/>
</dbReference>
<dbReference type="GO" id="GO:0016020">
    <property type="term" value="C:membrane"/>
    <property type="evidence" value="ECO:0007669"/>
    <property type="project" value="UniProtKB-KW"/>
</dbReference>
<dbReference type="GO" id="GO:0019013">
    <property type="term" value="C:viral nucleocapsid"/>
    <property type="evidence" value="ECO:0007669"/>
    <property type="project" value="UniProtKB-KW"/>
</dbReference>
<dbReference type="GO" id="GO:0055036">
    <property type="term" value="C:virion membrane"/>
    <property type="evidence" value="ECO:0007669"/>
    <property type="project" value="UniProtKB-SubCell"/>
</dbReference>
<dbReference type="GO" id="GO:0004190">
    <property type="term" value="F:aspartic-type endopeptidase activity"/>
    <property type="evidence" value="ECO:0007669"/>
    <property type="project" value="UniProtKB-KW"/>
</dbReference>
<dbReference type="GO" id="GO:0003677">
    <property type="term" value="F:DNA binding"/>
    <property type="evidence" value="ECO:0007669"/>
    <property type="project" value="UniProtKB-KW"/>
</dbReference>
<dbReference type="GO" id="GO:0003887">
    <property type="term" value="F:DNA-directed DNA polymerase activity"/>
    <property type="evidence" value="ECO:0007669"/>
    <property type="project" value="UniProtKB-KW"/>
</dbReference>
<dbReference type="GO" id="GO:0004533">
    <property type="term" value="F:exoribonuclease H activity"/>
    <property type="evidence" value="ECO:0007669"/>
    <property type="project" value="UniProtKB-EC"/>
</dbReference>
<dbReference type="GO" id="GO:0008289">
    <property type="term" value="F:lipid binding"/>
    <property type="evidence" value="ECO:0007669"/>
    <property type="project" value="UniProtKB-KW"/>
</dbReference>
<dbReference type="GO" id="GO:0035613">
    <property type="term" value="F:RNA stem-loop binding"/>
    <property type="evidence" value="ECO:0007669"/>
    <property type="project" value="TreeGrafter"/>
</dbReference>
<dbReference type="GO" id="GO:0003964">
    <property type="term" value="F:RNA-directed DNA polymerase activity"/>
    <property type="evidence" value="ECO:0007669"/>
    <property type="project" value="UniProtKB-KW"/>
</dbReference>
<dbReference type="GO" id="GO:0004523">
    <property type="term" value="F:RNA-DNA hybrid ribonuclease activity"/>
    <property type="evidence" value="ECO:0007669"/>
    <property type="project" value="InterPro"/>
</dbReference>
<dbReference type="GO" id="GO:0005198">
    <property type="term" value="F:structural molecule activity"/>
    <property type="evidence" value="ECO:0007669"/>
    <property type="project" value="InterPro"/>
</dbReference>
<dbReference type="GO" id="GO:0008270">
    <property type="term" value="F:zinc ion binding"/>
    <property type="evidence" value="ECO:0007669"/>
    <property type="project" value="UniProtKB-KW"/>
</dbReference>
<dbReference type="GO" id="GO:0015074">
    <property type="term" value="P:DNA integration"/>
    <property type="evidence" value="ECO:0007669"/>
    <property type="project" value="UniProtKB-KW"/>
</dbReference>
<dbReference type="GO" id="GO:0006310">
    <property type="term" value="P:DNA recombination"/>
    <property type="evidence" value="ECO:0007669"/>
    <property type="project" value="UniProtKB-KW"/>
</dbReference>
<dbReference type="GO" id="GO:0075713">
    <property type="term" value="P:establishment of integrated proviral latency"/>
    <property type="evidence" value="ECO:0007669"/>
    <property type="project" value="UniProtKB-KW"/>
</dbReference>
<dbReference type="GO" id="GO:0006508">
    <property type="term" value="P:proteolysis"/>
    <property type="evidence" value="ECO:0007669"/>
    <property type="project" value="UniProtKB-KW"/>
</dbReference>
<dbReference type="GO" id="GO:0046718">
    <property type="term" value="P:symbiont entry into host cell"/>
    <property type="evidence" value="ECO:0007669"/>
    <property type="project" value="UniProtKB-KW"/>
</dbReference>
<dbReference type="GO" id="GO:0052151">
    <property type="term" value="P:symbiont-mediated activation of host apoptosis"/>
    <property type="evidence" value="ECO:0007669"/>
    <property type="project" value="UniProtKB-KW"/>
</dbReference>
<dbReference type="GO" id="GO:0039657">
    <property type="term" value="P:symbiont-mediated suppression of host gene expression"/>
    <property type="evidence" value="ECO:0007669"/>
    <property type="project" value="UniProtKB-KW"/>
</dbReference>
<dbReference type="GO" id="GO:0044826">
    <property type="term" value="P:viral genome integration into host DNA"/>
    <property type="evidence" value="ECO:0007669"/>
    <property type="project" value="UniProtKB-KW"/>
</dbReference>
<dbReference type="GO" id="GO:0075732">
    <property type="term" value="P:viral penetration into host nucleus"/>
    <property type="evidence" value="ECO:0007669"/>
    <property type="project" value="UniProtKB-KW"/>
</dbReference>
<dbReference type="GO" id="GO:0075523">
    <property type="term" value="P:viral translational frameshifting"/>
    <property type="evidence" value="ECO:0007669"/>
    <property type="project" value="UniProtKB-KW"/>
</dbReference>
<dbReference type="CDD" id="cd05482">
    <property type="entry name" value="HIV_retropepsin_like"/>
    <property type="match status" value="1"/>
</dbReference>
<dbReference type="CDD" id="cd01645">
    <property type="entry name" value="RT_Rtv"/>
    <property type="match status" value="1"/>
</dbReference>
<dbReference type="FunFam" id="1.10.1200.30:FF:000001">
    <property type="entry name" value="Gag polyprotein"/>
    <property type="match status" value="1"/>
</dbReference>
<dbReference type="FunFam" id="1.10.375.10:FF:000001">
    <property type="entry name" value="Gag polyprotein"/>
    <property type="match status" value="1"/>
</dbReference>
<dbReference type="FunFam" id="4.10.60.10:FF:000001">
    <property type="entry name" value="Gag polyprotein"/>
    <property type="match status" value="1"/>
</dbReference>
<dbReference type="FunFam" id="2.40.70.10:FF:000001">
    <property type="entry name" value="Gag-Pol polyprotein"/>
    <property type="match status" value="1"/>
</dbReference>
<dbReference type="FunFam" id="3.30.420.10:FF:000025">
    <property type="entry name" value="Gag-Pol polyprotein"/>
    <property type="match status" value="1"/>
</dbReference>
<dbReference type="FunFam" id="2.30.30.10:FF:000001">
    <property type="entry name" value="POL polyprotein"/>
    <property type="match status" value="1"/>
</dbReference>
<dbReference type="FunFam" id="3.30.420.10:FF:000017">
    <property type="entry name" value="POL polyprotein"/>
    <property type="match status" value="1"/>
</dbReference>
<dbReference type="FunFam" id="3.30.70.270:FF:000016">
    <property type="entry name" value="POL polyprotein"/>
    <property type="match status" value="1"/>
</dbReference>
<dbReference type="Gene3D" id="1.10.10.200">
    <property type="match status" value="1"/>
</dbReference>
<dbReference type="Gene3D" id="1.10.1200.30">
    <property type="match status" value="1"/>
</dbReference>
<dbReference type="Gene3D" id="3.30.70.270">
    <property type="match status" value="3"/>
</dbReference>
<dbReference type="Gene3D" id="2.40.70.10">
    <property type="entry name" value="Acid Proteases"/>
    <property type="match status" value="1"/>
</dbReference>
<dbReference type="Gene3D" id="3.10.10.10">
    <property type="entry name" value="HIV Type 1 Reverse Transcriptase, subunit A, domain 1"/>
    <property type="match status" value="1"/>
</dbReference>
<dbReference type="Gene3D" id="1.10.375.10">
    <property type="entry name" value="Human Immunodeficiency Virus Type 1 Capsid Protein"/>
    <property type="match status" value="1"/>
</dbReference>
<dbReference type="Gene3D" id="1.10.150.90">
    <property type="entry name" value="Immunodeficiency lentiviruses, gag gene matrix protein p17"/>
    <property type="match status" value="1"/>
</dbReference>
<dbReference type="Gene3D" id="2.30.30.10">
    <property type="entry name" value="Integrase, C-terminal domain superfamily, retroviral"/>
    <property type="match status" value="1"/>
</dbReference>
<dbReference type="Gene3D" id="3.30.420.10">
    <property type="entry name" value="Ribonuclease H-like superfamily/Ribonuclease H"/>
    <property type="match status" value="2"/>
</dbReference>
<dbReference type="Gene3D" id="1.20.5.760">
    <property type="entry name" value="Single helix bin"/>
    <property type="match status" value="1"/>
</dbReference>
<dbReference type="Gene3D" id="4.10.60.10">
    <property type="entry name" value="Zinc finger, CCHC-type"/>
    <property type="match status" value="1"/>
</dbReference>
<dbReference type="InterPro" id="IPR001969">
    <property type="entry name" value="Aspartic_peptidase_AS"/>
</dbReference>
<dbReference type="InterPro" id="IPR043502">
    <property type="entry name" value="DNA/RNA_pol_sf"/>
</dbReference>
<dbReference type="InterPro" id="IPR045345">
    <property type="entry name" value="Gag_p24_C"/>
</dbReference>
<dbReference type="InterPro" id="IPR017856">
    <property type="entry name" value="Integrase-like_N"/>
</dbReference>
<dbReference type="InterPro" id="IPR036862">
    <property type="entry name" value="Integrase_C_dom_sf_retrovir"/>
</dbReference>
<dbReference type="InterPro" id="IPR001037">
    <property type="entry name" value="Integrase_C_retrovir"/>
</dbReference>
<dbReference type="InterPro" id="IPR001584">
    <property type="entry name" value="Integrase_cat-core"/>
</dbReference>
<dbReference type="InterPro" id="IPR003308">
    <property type="entry name" value="Integrase_Zn-bd_dom_N"/>
</dbReference>
<dbReference type="InterPro" id="IPR000071">
    <property type="entry name" value="Lentvrl_matrix_N"/>
</dbReference>
<dbReference type="InterPro" id="IPR012344">
    <property type="entry name" value="Matrix_HIV/RSV_N"/>
</dbReference>
<dbReference type="InterPro" id="IPR001995">
    <property type="entry name" value="Peptidase_A2_cat"/>
</dbReference>
<dbReference type="InterPro" id="IPR021109">
    <property type="entry name" value="Peptidase_aspartic_dom_sf"/>
</dbReference>
<dbReference type="InterPro" id="IPR034170">
    <property type="entry name" value="Retropepsin-like_cat_dom"/>
</dbReference>
<dbReference type="InterPro" id="IPR018061">
    <property type="entry name" value="Retropepsins"/>
</dbReference>
<dbReference type="InterPro" id="IPR008916">
    <property type="entry name" value="Retrov_capsid_C"/>
</dbReference>
<dbReference type="InterPro" id="IPR008919">
    <property type="entry name" value="Retrov_capsid_N"/>
</dbReference>
<dbReference type="InterPro" id="IPR010999">
    <property type="entry name" value="Retrovr_matrix"/>
</dbReference>
<dbReference type="InterPro" id="IPR043128">
    <property type="entry name" value="Rev_trsase/Diguanyl_cyclase"/>
</dbReference>
<dbReference type="InterPro" id="IPR012337">
    <property type="entry name" value="RNaseH-like_sf"/>
</dbReference>
<dbReference type="InterPro" id="IPR002156">
    <property type="entry name" value="RNaseH_domain"/>
</dbReference>
<dbReference type="InterPro" id="IPR036397">
    <property type="entry name" value="RNaseH_sf"/>
</dbReference>
<dbReference type="InterPro" id="IPR000477">
    <property type="entry name" value="RT_dom"/>
</dbReference>
<dbReference type="InterPro" id="IPR010659">
    <property type="entry name" value="RVT_connect"/>
</dbReference>
<dbReference type="InterPro" id="IPR010661">
    <property type="entry name" value="RVT_thumb"/>
</dbReference>
<dbReference type="InterPro" id="IPR001878">
    <property type="entry name" value="Znf_CCHC"/>
</dbReference>
<dbReference type="InterPro" id="IPR036875">
    <property type="entry name" value="Znf_CCHC_sf"/>
</dbReference>
<dbReference type="PANTHER" id="PTHR41694">
    <property type="entry name" value="ENDOGENOUS RETROVIRUS GROUP K MEMBER POL PROTEIN"/>
    <property type="match status" value="1"/>
</dbReference>
<dbReference type="PANTHER" id="PTHR41694:SF3">
    <property type="entry name" value="RNA-DIRECTED DNA POLYMERASE-RELATED"/>
    <property type="match status" value="1"/>
</dbReference>
<dbReference type="Pfam" id="PF00540">
    <property type="entry name" value="Gag_p17"/>
    <property type="match status" value="1"/>
</dbReference>
<dbReference type="Pfam" id="PF19317">
    <property type="entry name" value="Gag_p24_C"/>
    <property type="match status" value="1"/>
</dbReference>
<dbReference type="Pfam" id="PF00552">
    <property type="entry name" value="IN_DBD_C"/>
    <property type="match status" value="1"/>
</dbReference>
<dbReference type="Pfam" id="PF02022">
    <property type="entry name" value="Integrase_Zn"/>
    <property type="match status" value="1"/>
</dbReference>
<dbReference type="Pfam" id="PF00075">
    <property type="entry name" value="RNase_H"/>
    <property type="match status" value="1"/>
</dbReference>
<dbReference type="Pfam" id="PF00665">
    <property type="entry name" value="rve"/>
    <property type="match status" value="1"/>
</dbReference>
<dbReference type="Pfam" id="PF00077">
    <property type="entry name" value="RVP"/>
    <property type="match status" value="1"/>
</dbReference>
<dbReference type="Pfam" id="PF00078">
    <property type="entry name" value="RVT_1"/>
    <property type="match status" value="1"/>
</dbReference>
<dbReference type="Pfam" id="PF06815">
    <property type="entry name" value="RVT_connect"/>
    <property type="match status" value="1"/>
</dbReference>
<dbReference type="Pfam" id="PF06817">
    <property type="entry name" value="RVT_thumb"/>
    <property type="match status" value="1"/>
</dbReference>
<dbReference type="Pfam" id="PF00098">
    <property type="entry name" value="zf-CCHC"/>
    <property type="match status" value="2"/>
</dbReference>
<dbReference type="PRINTS" id="PR00234">
    <property type="entry name" value="HIV1MATRIX"/>
</dbReference>
<dbReference type="SMART" id="SM00343">
    <property type="entry name" value="ZnF_C2HC"/>
    <property type="match status" value="2"/>
</dbReference>
<dbReference type="SUPFAM" id="SSF50630">
    <property type="entry name" value="Acid proteases"/>
    <property type="match status" value="1"/>
</dbReference>
<dbReference type="SUPFAM" id="SSF50122">
    <property type="entry name" value="DNA-binding domain of retroviral integrase"/>
    <property type="match status" value="1"/>
</dbReference>
<dbReference type="SUPFAM" id="SSF56672">
    <property type="entry name" value="DNA/RNA polymerases"/>
    <property type="match status" value="1"/>
</dbReference>
<dbReference type="SUPFAM" id="SSF46919">
    <property type="entry name" value="N-terminal Zn binding domain of HIV integrase"/>
    <property type="match status" value="1"/>
</dbReference>
<dbReference type="SUPFAM" id="SSF47836">
    <property type="entry name" value="Retroviral matrix proteins"/>
    <property type="match status" value="1"/>
</dbReference>
<dbReference type="SUPFAM" id="SSF47353">
    <property type="entry name" value="Retrovirus capsid dimerization domain-like"/>
    <property type="match status" value="1"/>
</dbReference>
<dbReference type="SUPFAM" id="SSF47943">
    <property type="entry name" value="Retrovirus capsid protein, N-terminal core domain"/>
    <property type="match status" value="1"/>
</dbReference>
<dbReference type="SUPFAM" id="SSF57756">
    <property type="entry name" value="Retrovirus zinc finger-like domains"/>
    <property type="match status" value="1"/>
</dbReference>
<dbReference type="SUPFAM" id="SSF53098">
    <property type="entry name" value="Ribonuclease H-like"/>
    <property type="match status" value="2"/>
</dbReference>
<dbReference type="PROSITE" id="PS50175">
    <property type="entry name" value="ASP_PROT_RETROV"/>
    <property type="match status" value="1"/>
</dbReference>
<dbReference type="PROSITE" id="PS00141">
    <property type="entry name" value="ASP_PROTEASE"/>
    <property type="match status" value="1"/>
</dbReference>
<dbReference type="PROSITE" id="PS50994">
    <property type="entry name" value="INTEGRASE"/>
    <property type="match status" value="1"/>
</dbReference>
<dbReference type="PROSITE" id="PS51027">
    <property type="entry name" value="INTEGRASE_DBD"/>
    <property type="match status" value="1"/>
</dbReference>
<dbReference type="PROSITE" id="PS50879">
    <property type="entry name" value="RNASE_H_1"/>
    <property type="match status" value="1"/>
</dbReference>
<dbReference type="PROSITE" id="PS50878">
    <property type="entry name" value="RT_POL"/>
    <property type="match status" value="1"/>
</dbReference>
<dbReference type="PROSITE" id="PS50158">
    <property type="entry name" value="ZF_CCHC"/>
    <property type="match status" value="2"/>
</dbReference>
<dbReference type="PROSITE" id="PS50876">
    <property type="entry name" value="ZF_INTEGRASE"/>
    <property type="match status" value="1"/>
</dbReference>
<organism>
    <name type="scientific">Human immunodeficiency virus type 1 group M subtype A (isolate MAL)</name>
    <name type="common">HIV-1</name>
    <dbReference type="NCBI Taxonomy" id="11697"/>
    <lineage>
        <taxon>Viruses</taxon>
        <taxon>Riboviria</taxon>
        <taxon>Pararnavirae</taxon>
        <taxon>Artverviricota</taxon>
        <taxon>Revtraviricetes</taxon>
        <taxon>Ortervirales</taxon>
        <taxon>Retroviridae</taxon>
        <taxon>Orthoretrovirinae</taxon>
        <taxon>Lentivirus</taxon>
        <taxon>Human immunodeficiency virus type 1</taxon>
    </lineage>
</organism>
<organismHost>
    <name type="scientific">Homo sapiens</name>
    <name type="common">Human</name>
    <dbReference type="NCBI Taxonomy" id="9606"/>
</organismHost>
<protein>
    <recommendedName>
        <fullName>Gag-Pol polyprotein</fullName>
    </recommendedName>
    <alternativeName>
        <fullName>Pr160Gag-Pol</fullName>
    </alternativeName>
    <component>
        <recommendedName>
            <fullName>Matrix protein p17</fullName>
            <shortName>MA</shortName>
        </recommendedName>
    </component>
    <component>
        <recommendedName>
            <fullName>Capsid protein p24</fullName>
            <shortName>CA</shortName>
        </recommendedName>
    </component>
    <component>
        <recommendedName>
            <fullName evidence="7">Spacer peptide 1</fullName>
            <shortName>SP1</shortName>
        </recommendedName>
        <alternativeName>
            <fullName>p2</fullName>
        </alternativeName>
    </component>
    <component>
        <recommendedName>
            <fullName>Nucleocapsid protein p7</fullName>
            <shortName>NC</shortName>
        </recommendedName>
    </component>
    <component>
        <recommendedName>
            <fullName>Transframe peptide</fullName>
            <shortName>TF</shortName>
        </recommendedName>
    </component>
    <component>
        <recommendedName>
            <fullName>p6-pol</fullName>
            <shortName>p6*</shortName>
        </recommendedName>
    </component>
    <component>
        <recommendedName>
            <fullName>Protease</fullName>
            <ecNumber>3.4.23.16</ecNumber>
        </recommendedName>
        <alternativeName>
            <fullName>PR</fullName>
        </alternativeName>
        <alternativeName>
            <fullName>Retropepsin</fullName>
        </alternativeName>
    </component>
    <component>
        <recommendedName>
            <fullName>Reverse transcriptase/ribonuclease H</fullName>
            <ecNumber>2.7.7.49</ecNumber>
            <ecNumber>2.7.7.7</ecNumber>
            <ecNumber>3.1.26.13</ecNumber>
        </recommendedName>
        <alternativeName>
            <fullName>Exoribonuclease H</fullName>
            <ecNumber>3.1.13.2</ecNumber>
        </alternativeName>
        <alternativeName>
            <fullName>p66 RT</fullName>
        </alternativeName>
    </component>
    <component>
        <recommendedName>
            <fullName>p51 RT</fullName>
        </recommendedName>
    </component>
    <component>
        <recommendedName>
            <fullName>p15</fullName>
        </recommendedName>
    </component>
    <component>
        <recommendedName>
            <fullName>Integrase</fullName>
            <shortName>IN</shortName>
            <ecNumber evidence="5">2.7.7.-</ecNumber>
            <ecNumber evidence="5">3.1.-.-</ecNumber>
        </recommendedName>
    </component>
</protein>
<name>POL_HV1MA</name>
<proteinExistence type="evidence at protein level"/>
<evidence type="ECO:0000250" key="1"/>
<evidence type="ECO:0000250" key="2">
    <source>
        <dbReference type="UniProtKB" id="P03347"/>
    </source>
</evidence>
<evidence type="ECO:0000250" key="3">
    <source>
        <dbReference type="UniProtKB" id="P03366"/>
    </source>
</evidence>
<evidence type="ECO:0000250" key="4">
    <source>
        <dbReference type="UniProtKB" id="P03367"/>
    </source>
</evidence>
<evidence type="ECO:0000250" key="5">
    <source>
        <dbReference type="UniProtKB" id="P04585"/>
    </source>
</evidence>
<evidence type="ECO:0000250" key="6">
    <source>
        <dbReference type="UniProtKB" id="P12493"/>
    </source>
</evidence>
<evidence type="ECO:0000250" key="7">
    <source>
        <dbReference type="UniProtKB" id="P12497"/>
    </source>
</evidence>
<evidence type="ECO:0000255" key="8"/>
<evidence type="ECO:0000255" key="9">
    <source>
        <dbReference type="PROSITE-ProRule" id="PRU00047"/>
    </source>
</evidence>
<evidence type="ECO:0000255" key="10">
    <source>
        <dbReference type="PROSITE-ProRule" id="PRU00275"/>
    </source>
</evidence>
<evidence type="ECO:0000255" key="11">
    <source>
        <dbReference type="PROSITE-ProRule" id="PRU00405"/>
    </source>
</evidence>
<evidence type="ECO:0000255" key="12">
    <source>
        <dbReference type="PROSITE-ProRule" id="PRU00408"/>
    </source>
</evidence>
<evidence type="ECO:0000255" key="13">
    <source>
        <dbReference type="PROSITE-ProRule" id="PRU00450"/>
    </source>
</evidence>
<evidence type="ECO:0000255" key="14">
    <source>
        <dbReference type="PROSITE-ProRule" id="PRU00457"/>
    </source>
</evidence>
<evidence type="ECO:0000255" key="15">
    <source>
        <dbReference type="PROSITE-ProRule" id="PRU00506"/>
    </source>
</evidence>
<evidence type="ECO:0000255" key="16">
    <source>
        <dbReference type="PROSITE-ProRule" id="PRU10094"/>
    </source>
</evidence>
<evidence type="ECO:0000305" key="17"/>
<evidence type="ECO:0007829" key="18">
    <source>
        <dbReference type="PDB" id="3IXO"/>
    </source>
</evidence>
<accession>P04588</accession>
<accession>Q79582</accession>
<feature type="initiator methionine" description="Removed; by host" evidence="1">
    <location>
        <position position="1"/>
    </location>
</feature>
<feature type="chain" id="PRO_0000261270" description="Gag-Pol polyprotein">
    <location>
        <begin position="2"/>
        <end position="1440"/>
    </location>
</feature>
<feature type="chain" id="PRO_0000042385" description="Matrix protein p17" evidence="1">
    <location>
        <begin position="2"/>
        <end position="138"/>
    </location>
</feature>
<feature type="chain" id="PRO_0000042386" description="Capsid protein p24" evidence="1">
    <location>
        <begin position="139"/>
        <end position="369"/>
    </location>
</feature>
<feature type="peptide" id="PRO_0000042387" description="Spacer peptide 1" evidence="1">
    <location>
        <begin position="370"/>
        <end position="383"/>
    </location>
</feature>
<feature type="chain" id="PRO_0000042388" description="Nucleocapsid protein p7" evidence="1">
    <location>
        <begin position="384"/>
        <end position="438"/>
    </location>
</feature>
<feature type="peptide" id="PRO_0000246719" description="Transframe peptide" evidence="8">
    <location>
        <begin position="439"/>
        <end position="446"/>
    </location>
</feature>
<feature type="chain" id="PRO_0000042389" description="p6-pol" evidence="8">
    <location>
        <begin position="447"/>
        <end position="493"/>
    </location>
</feature>
<feature type="chain" id="PRO_0000038659" description="Protease" evidence="1">
    <location>
        <begin position="494"/>
        <end position="592"/>
    </location>
</feature>
<feature type="chain" id="PRO_0000042390" description="Reverse transcriptase/ribonuclease H" evidence="1">
    <location>
        <begin position="593"/>
        <end position="1152"/>
    </location>
</feature>
<feature type="chain" id="PRO_0000042391" description="p51 RT" evidence="1">
    <location>
        <begin position="593"/>
        <end position="1032"/>
    </location>
</feature>
<feature type="chain" id="PRO_0000042392" description="p15" evidence="1">
    <location>
        <begin position="1033"/>
        <end position="1152"/>
    </location>
</feature>
<feature type="chain" id="PRO_0000042393" description="Integrase" evidence="1">
    <location>
        <begin position="1153"/>
        <end position="1440"/>
    </location>
</feature>
<feature type="domain" description="Peptidase A2" evidence="10">
    <location>
        <begin position="513"/>
        <end position="582"/>
    </location>
</feature>
<feature type="domain" description="Reverse transcriptase" evidence="11">
    <location>
        <begin position="636"/>
        <end position="826"/>
    </location>
</feature>
<feature type="domain" description="RNase H type-1" evidence="12">
    <location>
        <begin position="1026"/>
        <end position="1149"/>
    </location>
</feature>
<feature type="domain" description="Integrase catalytic" evidence="14">
    <location>
        <begin position="1206"/>
        <end position="1356"/>
    </location>
</feature>
<feature type="zinc finger region" description="CCHC-type 1" evidence="9">
    <location>
        <begin position="396"/>
        <end position="413"/>
    </location>
</feature>
<feature type="zinc finger region" description="CCHC-type 2" evidence="9">
    <location>
        <begin position="417"/>
        <end position="434"/>
    </location>
</feature>
<feature type="zinc finger region" description="Integrase-type" evidence="13">
    <location>
        <begin position="1155"/>
        <end position="1196"/>
    </location>
</feature>
<feature type="DNA-binding region" description="Integrase-type" evidence="15">
    <location>
        <begin position="1375"/>
        <end position="1422"/>
    </location>
</feature>
<feature type="region of interest" description="Interaction with Gp41" evidence="7">
    <location>
        <begin position="7"/>
        <end position="31"/>
    </location>
</feature>
<feature type="region of interest" description="Interaction with host CALM1" evidence="5">
    <location>
        <begin position="8"/>
        <end position="43"/>
    </location>
</feature>
<feature type="region of interest" description="Interaction with host AP3D1" evidence="7">
    <location>
        <begin position="12"/>
        <end position="19"/>
    </location>
</feature>
<feature type="region of interest" description="Interaction with membrane phosphatidylinositol 4,5-bisphosphate and RNA" evidence="7">
    <location>
        <begin position="14"/>
        <end position="33"/>
    </location>
</feature>
<feature type="region of interest" description="Interaction with membrane phosphatidylinositol 4,5-bisphosphate" evidence="7">
    <location>
        <begin position="73"/>
        <end position="77"/>
    </location>
</feature>
<feature type="region of interest" description="Interaction with human PPIA/CYPA and NUP153" evidence="7">
    <location>
        <begin position="195"/>
        <end position="233"/>
    </location>
</feature>
<feature type="region of interest" description="Dimerization/Multimerization of capsid protein p24" evidence="5">
    <location>
        <begin position="283"/>
        <end position="369"/>
    </location>
</feature>
<feature type="region of interest" description="Dimerization of protease" evidence="5">
    <location>
        <begin position="494"/>
        <end position="498"/>
    </location>
</feature>
<feature type="region of interest" description="Dimerization of protease" evidence="5">
    <location>
        <begin position="542"/>
        <end position="548"/>
    </location>
</feature>
<feature type="region of interest" description="Dimerization of protease" evidence="5">
    <location>
        <begin position="581"/>
        <end position="593"/>
    </location>
</feature>
<feature type="region of interest" description="RT 'primer grip'" evidence="1">
    <location>
        <begin position="819"/>
        <end position="827"/>
    </location>
</feature>
<feature type="short sequence motif" description="Nuclear export signal" evidence="1">
    <location>
        <begin position="16"/>
        <end position="22"/>
    </location>
</feature>
<feature type="short sequence motif" description="Nuclear localization signal" evidence="1">
    <location>
        <begin position="26"/>
        <end position="32"/>
    </location>
</feature>
<feature type="short sequence motif" description="Tryptophan repeat motif" evidence="1">
    <location>
        <begin position="990"/>
        <end position="1006"/>
    </location>
</feature>
<feature type="active site" description="For protease activity; shared with dimeric partner" evidence="16">
    <location>
        <position position="518"/>
    </location>
</feature>
<feature type="binding site" evidence="1">
    <location>
        <position position="702"/>
    </location>
    <ligand>
        <name>Mg(2+)</name>
        <dbReference type="ChEBI" id="CHEBI:18420"/>
        <label>1</label>
        <note>catalytic; for reverse transcriptase activity</note>
    </ligand>
</feature>
<feature type="binding site" evidence="1">
    <location>
        <position position="777"/>
    </location>
    <ligand>
        <name>Mg(2+)</name>
        <dbReference type="ChEBI" id="CHEBI:18420"/>
        <label>1</label>
        <note>catalytic; for reverse transcriptase activity</note>
    </ligand>
</feature>
<feature type="binding site" evidence="1">
    <location>
        <position position="778"/>
    </location>
    <ligand>
        <name>Mg(2+)</name>
        <dbReference type="ChEBI" id="CHEBI:18420"/>
        <label>1</label>
        <note>catalytic; for reverse transcriptase activity</note>
    </ligand>
</feature>
<feature type="binding site" evidence="1">
    <location>
        <position position="1035"/>
    </location>
    <ligand>
        <name>Mg(2+)</name>
        <dbReference type="ChEBI" id="CHEBI:18420"/>
        <label>2</label>
        <note>catalytic; for RNase H activity</note>
    </ligand>
</feature>
<feature type="binding site" evidence="1">
    <location>
        <position position="1070"/>
    </location>
    <ligand>
        <name>Mg(2+)</name>
        <dbReference type="ChEBI" id="CHEBI:18420"/>
        <label>2</label>
        <note>catalytic; for RNase H activity</note>
    </ligand>
</feature>
<feature type="binding site" evidence="1">
    <location>
        <position position="1090"/>
    </location>
    <ligand>
        <name>Mg(2+)</name>
        <dbReference type="ChEBI" id="CHEBI:18420"/>
        <label>2</label>
        <note>catalytic; for RNase H activity</note>
    </ligand>
</feature>
<feature type="binding site" evidence="1">
    <location>
        <position position="1141"/>
    </location>
    <ligand>
        <name>Mg(2+)</name>
        <dbReference type="ChEBI" id="CHEBI:18420"/>
        <label>2</label>
        <note>catalytic; for RNase H activity</note>
    </ligand>
</feature>
<feature type="binding site" evidence="13">
    <location>
        <position position="1164"/>
    </location>
    <ligand>
        <name>Zn(2+)</name>
        <dbReference type="ChEBI" id="CHEBI:29105"/>
    </ligand>
</feature>
<feature type="binding site" evidence="13">
    <location>
        <position position="1168"/>
    </location>
    <ligand>
        <name>Zn(2+)</name>
        <dbReference type="ChEBI" id="CHEBI:29105"/>
    </ligand>
</feature>
<feature type="binding site" evidence="13">
    <location>
        <position position="1192"/>
    </location>
    <ligand>
        <name>Zn(2+)</name>
        <dbReference type="ChEBI" id="CHEBI:29105"/>
    </ligand>
</feature>
<feature type="binding site" evidence="13">
    <location>
        <position position="1195"/>
    </location>
    <ligand>
        <name>Zn(2+)</name>
        <dbReference type="ChEBI" id="CHEBI:29105"/>
    </ligand>
</feature>
<feature type="binding site" evidence="1">
    <location>
        <position position="1216"/>
    </location>
    <ligand>
        <name>Mg(2+)</name>
        <dbReference type="ChEBI" id="CHEBI:18420"/>
        <label>3</label>
        <note>catalytic; for integrase activity</note>
    </ligand>
</feature>
<feature type="binding site" evidence="1">
    <location>
        <position position="1268"/>
    </location>
    <ligand>
        <name>Mg(2+)</name>
        <dbReference type="ChEBI" id="CHEBI:18420"/>
        <label>3</label>
        <note>catalytic; for integrase activity</note>
    </ligand>
</feature>
<feature type="binding site" evidence="5">
    <location>
        <position position="1304"/>
    </location>
    <ligand>
        <name>Mg(2+)</name>
        <dbReference type="ChEBI" id="CHEBI:18420"/>
        <label>3</label>
        <note>catalytic; for integrase activity</note>
    </ligand>
</feature>
<feature type="site" description="Cleavage; by viral protease" evidence="1">
    <location>
        <begin position="138"/>
        <end position="139"/>
    </location>
</feature>
<feature type="site" description="Cis/trans isomerization of proline peptide bond; by human PPIA/CYPA" evidence="1">
    <location>
        <begin position="227"/>
        <end position="228"/>
    </location>
</feature>
<feature type="site" description="Cleavage; by viral protease" evidence="1">
    <location>
        <begin position="369"/>
        <end position="370"/>
    </location>
</feature>
<feature type="site" description="Cleavage; by viral protease" evidence="1">
    <location>
        <begin position="383"/>
        <end position="384"/>
    </location>
</feature>
<feature type="site" description="Cleavage; by viral protease" evidence="8">
    <location>
        <begin position="438"/>
        <end position="439"/>
    </location>
</feature>
<feature type="site" description="Cleavage; by viral protease" evidence="1">
    <location>
        <begin position="446"/>
        <end position="447"/>
    </location>
</feature>
<feature type="site" description="Cleavage; by viral protease" evidence="1">
    <location>
        <begin position="493"/>
        <end position="494"/>
    </location>
</feature>
<feature type="site" description="Cleavage; by viral protease" evidence="1">
    <location>
        <begin position="592"/>
        <end position="593"/>
    </location>
</feature>
<feature type="site" description="Essential for RT p66/p51 heterodimerization" evidence="1">
    <location>
        <position position="993"/>
    </location>
</feature>
<feature type="site" description="Essential for RT p66/p51 heterodimerization" evidence="1">
    <location>
        <position position="1006"/>
    </location>
</feature>
<feature type="site" description="Cleavage; by viral protease; partial" evidence="1">
    <location>
        <begin position="1032"/>
        <end position="1033"/>
    </location>
</feature>
<feature type="site" description="Cleavage; by viral protease" evidence="1">
    <location>
        <begin position="1152"/>
        <end position="1153"/>
    </location>
</feature>
<feature type="modified residue" description="Phosphotyrosine; by host" evidence="1">
    <location>
        <position position="138"/>
    </location>
</feature>
<feature type="lipid moiety-binding region" description="N-myristoyl glycine; by host" evidence="1">
    <location>
        <position position="2"/>
    </location>
</feature>
<feature type="strand" evidence="18">
    <location>
        <begin position="495"/>
        <end position="500"/>
    </location>
</feature>
<feature type="strand" evidence="18">
    <location>
        <begin position="503"/>
        <end position="508"/>
    </location>
</feature>
<feature type="strand" evidence="18">
    <location>
        <begin position="511"/>
        <end position="517"/>
    </location>
</feature>
<feature type="strand" evidence="18">
    <location>
        <begin position="525"/>
        <end position="528"/>
    </location>
</feature>
<feature type="strand" evidence="18">
    <location>
        <begin position="536"/>
        <end position="542"/>
    </location>
</feature>
<feature type="strand" evidence="18">
    <location>
        <begin position="545"/>
        <end position="559"/>
    </location>
</feature>
<feature type="strand" evidence="18">
    <location>
        <begin position="562"/>
        <end position="572"/>
    </location>
</feature>
<feature type="helix" evidence="18">
    <location>
        <begin position="580"/>
        <end position="583"/>
    </location>
</feature>
<feature type="helix" evidence="18">
    <location>
        <begin position="584"/>
        <end position="586"/>
    </location>
</feature>
<feature type="strand" evidence="18">
    <location>
        <begin position="589"/>
        <end position="591"/>
    </location>
</feature>
<comment type="function">
    <molecule>Gag-Pol polyprotein</molecule>
    <text evidence="1">Mediates, with Gag polyprotein, the essential events in virion assembly, including binding the plasma membrane, making the protein-protein interactions necessary to create spherical particles, recruiting the viral Env proteins, and packaging the genomic RNA via direct interactions with the RNA packaging sequence (Psi). Gag-Pol polyprotein may regulate its own translation, by the binding genomic RNA in the 5'-UTR. At low concentration, the polyprotein would promote translation, whereas at high concentration, the polyprotein would encapsidate genomic RNA and then shut off translation.</text>
</comment>
<comment type="function">
    <molecule>Matrix protein p17</molecule>
    <text evidence="7">Targets the polyprotein to the plasma membrane via a multipartite membrane-binding signal, that includes its myristoylated N-terminus. Matrix protein is part of the pre-integration complex. Implicated in the release from host cell mediated by Vpu. Binds to RNA.</text>
</comment>
<comment type="function">
    <molecule>Capsid protein p24</molecule>
    <text evidence="5 7">Forms the conical core that encapsulates the genomic RNA-nucleocapsid complex in the virion. Most core are conical, with only 7% tubular. The core is constituted by capsid protein hexamer subunits. The core is disassembled soon after virion entry (By similarity). Host restriction factors such as TRIM5-alpha or TRIMCyp bind retroviral capsids and cause premature capsid disassembly, leading to blocks in reverse transcription. Capsid restriction by TRIM5 is one of the factors which restricts HIV-1 to the human species. Host PIN1 apparently facilitates the virion uncoating. On the other hand, interactions with PDZD8 or CYPA stabilize the capsid.</text>
</comment>
<comment type="function">
    <molecule>Nucleocapsid protein p7</molecule>
    <text evidence="5">Encapsulates and protects viral dimeric unspliced genomic RNA (gRNA). Binds these RNAs through its zinc fingers. Acts as a nucleic acid chaperone which is involved in rearangement of nucleic acid secondary structure during gRNA retrotranscription. Also facilitates template switch leading to recombination. As part of the polyprotein, participates in gRNA dimerization, packaging, tRNA incorporation and virion assembly.</text>
</comment>
<comment type="function">
    <molecule>Protease</molecule>
    <text evidence="5 10">Aspartyl protease that mediates proteolytic cleavages of Gag and Gag-Pol polyproteins during or shortly after the release of the virion from the plasma membrane. Cleavages take place as an ordered, step-wise cascade to yield mature proteins. This process is called maturation. Displays maximal activity during the budding process just prior to particle release from the cell. Also cleaves Nef and Vif, probably concomitantly with viral structural proteins on maturation of virus particles. Hydrolyzes host EIF4GI and PABP1 in order to shut off the capped cellular mRNA translation. The resulting inhibition of cellular protein synthesis serves to ensure maximal viral gene expression and to evade host immune response. Also mediates cleavage of host YTHDF3. Mediates cleavage of host CARD8, thereby activating the CARD8 inflammasome, leading to the clearance of latent HIV-1 in patient CD4(+) T-cells after viral reactivation; in contrast, HIV-1 can evade CARD8-sensing when its protease remains inactive in infected cells prior to viral budding (By similarity).</text>
</comment>
<comment type="function">
    <molecule>Reverse transcriptase/ribonuclease H</molecule>
    <text evidence="5">Multifunctional enzyme that converts the viral RNA genome into dsDNA in the cytoplasm, shortly after virus entry into the cell. This enzyme displays a DNA polymerase activity that can copy either DNA or RNA templates, and a ribonuclease H (RNase H) activity that cleaves the RNA strand of RNA-DNA heteroduplexes in a partially processive 3' to 5' endonucleasic mode. Conversion of viral genomic RNA into dsDNA requires many steps. A tRNA(3)-Lys binds to the primer-binding site (PBS) situated at the 5'-end of the viral RNA. RT uses the 3' end of the tRNA primer to perform a short round of RNA-dependent minus-strand DNA synthesis. The reading proceeds through the U5 region and ends after the repeated (R) region which is present at both ends of viral RNA. The portion of the RNA-DNA heteroduplex is digested by the RNase H, resulting in a ssDNA product attached to the tRNA primer. This ssDNA/tRNA hybridizes with the identical R region situated at the 3' end of viral RNA. This template exchange, known as minus-strand DNA strong stop transfer, can be either intra- or intermolecular. RT uses the 3' end of this newly synthesized short ssDNA to perform the RNA-dependent minus-strand DNA synthesis of the whole template. RNase H digests the RNA template except for two polypurine tracts (PPTs) situated at the 5'-end and near the center of the genome. It is not clear if both polymerase and RNase H activities are simultaneous. RNase H probably can proceed both in a polymerase-dependent (RNA cut into small fragments by the same RT performing DNA synthesis) and a polymerase-independent mode (cleavage of remaining RNA fragments by free RTs). Secondly, RT performs DNA-directed plus-strand DNA synthesis using the PPTs that have not been removed by RNase H as primers. PPTs and tRNA primers are then removed by RNase H. The 3' and 5' ssDNA PBS regions hybridize to form a circular dsDNA intermediate. Strand displacement synthesis by RT to the PBS and PPT ends produces a blunt ended, linear dsDNA copy of the viral genome that includes long terminal repeats (LTRs) at both ends.</text>
</comment>
<comment type="function">
    <molecule>Integrase</molecule>
    <text evidence="5">Catalyzes viral DNA integration into the host chromosome, by performing a series of DNA cutting and joining reactions. This enzyme activity takes place after virion entry into a cell and reverse transcription of the RNA genome in dsDNA. The first step in the integration process is 3' processing. This step requires a complex comprising the viral genome, matrix protein, Vpr and integrase. This complex is called the pre-integration complex (PIC). The integrase protein removes 2 nucleotides from each 3' end of the viral DNA, leaving recessed CA OH's at the 3' ends. In the second step, the PIC enters cell nucleus. This process is mediated through integrase and Vpr proteins, and allows the virus to infect a non dividing cell. This ability to enter the nucleus is specific of lentiviruses, other retroviruses cannot and rely on cell division to access cell chromosomes. In the third step, termed strand transfer, the integrase protein joins the previously processed 3' ends to the 5' ends of strands of target cellular DNA at the site of integration. The 5'-ends are produced by integrase-catalyzed staggered cuts, 5 bp apart. A Y-shaped, gapped, recombination intermediate results, with the 5'-ends of the viral DNA strands and the 3' ends of target DNA strands remaining unjoined, flanking a gap of 5 bp. The last step is viral DNA integration into host chromosome. This involves host DNA repair synthesis in which the 5 bp gaps between the unjoined strands are filled in and then ligated. Since this process occurs at both cuts flanking the HIV genome, a 5 bp duplication of host DNA is produced at the ends of HIV-1 integration. Alternatively, Integrase may catalyze the excision of viral DNA just after strand transfer, this is termed disintegration.</text>
</comment>
<comment type="catalytic activity">
    <reaction evidence="10">
        <text>Specific for a P1 residue that is hydrophobic, and P1' variable, but often Pro.</text>
        <dbReference type="EC" id="3.4.23.16"/>
    </reaction>
</comment>
<comment type="catalytic activity">
    <reaction evidence="1">
        <text>Endohydrolysis of RNA in RNA/DNA hybrids. Three different cleavage modes: 1. sequence-specific internal cleavage of RNA. Human immunodeficiency virus type 1 and Moloney murine leukemia virus enzymes prefer to cleave the RNA strand one nucleotide away from the RNA-DNA junction. 2. RNA 5'-end directed cleavage 13-19 nucleotides from the RNA end. 3. DNA 3'-end directed cleavage 15-20 nucleotides away from the primer terminus.</text>
        <dbReference type="EC" id="3.1.26.13"/>
    </reaction>
</comment>
<comment type="catalytic activity">
    <reaction evidence="1">
        <text>3'-end directed exonucleolytic cleavage of viral RNA-DNA hybrid.</text>
        <dbReference type="EC" id="3.1.13.2"/>
    </reaction>
</comment>
<comment type="catalytic activity">
    <reaction evidence="11">
        <text>DNA(n) + a 2'-deoxyribonucleoside 5'-triphosphate = DNA(n+1) + diphosphate</text>
        <dbReference type="Rhea" id="RHEA:22508"/>
        <dbReference type="Rhea" id="RHEA-COMP:17339"/>
        <dbReference type="Rhea" id="RHEA-COMP:17340"/>
        <dbReference type="ChEBI" id="CHEBI:33019"/>
        <dbReference type="ChEBI" id="CHEBI:61560"/>
        <dbReference type="ChEBI" id="CHEBI:173112"/>
        <dbReference type="EC" id="2.7.7.49"/>
    </reaction>
</comment>
<comment type="catalytic activity">
    <reaction evidence="11">
        <text>DNA(n) + a 2'-deoxyribonucleoside 5'-triphosphate = DNA(n+1) + diphosphate</text>
        <dbReference type="Rhea" id="RHEA:22508"/>
        <dbReference type="Rhea" id="RHEA-COMP:17339"/>
        <dbReference type="Rhea" id="RHEA-COMP:17340"/>
        <dbReference type="ChEBI" id="CHEBI:33019"/>
        <dbReference type="ChEBI" id="CHEBI:61560"/>
        <dbReference type="ChEBI" id="CHEBI:173112"/>
        <dbReference type="EC" id="2.7.7.7"/>
    </reaction>
</comment>
<comment type="cofactor">
    <cofactor evidence="1">
        <name>Mg(2+)</name>
        <dbReference type="ChEBI" id="CHEBI:18420"/>
    </cofactor>
    <text evidence="1">Binds 2 magnesium ions for reverse transcriptase polymerase activity.</text>
</comment>
<comment type="cofactor">
    <cofactor evidence="1">
        <name>Mg(2+)</name>
        <dbReference type="ChEBI" id="CHEBI:18420"/>
    </cofactor>
    <text evidence="1">Binds 2 magnesium ions for ribonuclease H (RNase H) activity. Substrate-binding is a precondition for magnesium binding.</text>
</comment>
<comment type="cofactor">
    <cofactor evidence="1">
        <name>Mg(2+)</name>
        <dbReference type="ChEBI" id="CHEBI:18420"/>
    </cofactor>
    <text evidence="1">Magnesium ions are required for integrase activity. Binds at least 1, maybe 2 magnesium ions.</text>
</comment>
<comment type="activity regulation">
    <text evidence="1">Protease: The viral protease is inhibited by many synthetic protease inhibitors (PIs), such as amprenavir, atazanavir, indinavir, loprinavir, nelfinavir, ritonavir and saquinavir. Use of protease inhibitors in tritherapy regimens permit more ambitious therapeutic strategies. Reverse transcriptase/ribonuclease H: RT can be inhibited either by nucleoside RT inhibitors (NRTIs) or by non nucleoside RT inhibitors (NNRTIs). NRTIs act as chain terminators, whereas NNRTIs inhibit DNA polymerization by binding a small hydrophobic pocket near the RT active site and inducing an allosteric change in this region. Classical NRTIs are abacavir, adefovir (PMEA), didanosine (ddI), lamivudine (3TC), stavudine (d4T), tenofovir (PMPA), zalcitabine (ddC), and zidovudine (AZT). Classical NNRTIs are atevirdine (BHAP U-87201E), delavirdine, efavirenz (DMP-266), emivirine (I-EBU), and nevirapine (BI-RG-587). The tritherapies used as a basic effective treatment of AIDS associate two NRTIs and one NNRTI.</text>
</comment>
<comment type="subunit">
    <molecule>Matrix protein p17</molecule>
    <text evidence="5 7">Homotrimer; further assembles as hexamers of trimers (By similarity). Interacts with gp41 (via C-terminus) (By similarity). Interacts with host CALM1; this interaction induces a conformational change in the Matrix protein, triggering exposure of the myristate group (By similarity). Interacts with host AP3D1; this interaction allows the polyprotein trafficking to multivesicular bodies during virus assembly (By similarity). Part of the pre-integration complex (PIC) which is composed of viral genome, matrix protein, Vpr and integrase (By similarity).</text>
</comment>
<comment type="subunit">
    <molecule>Capsid protein p24</molecule>
    <text evidence="5 7">Homodimer; the homodimer further multimerizes as homohexamers or homopentamers. Interacts with human PPIA/CYPA (By similarity); This interaction stabilizes the capsid. Interacts with human NUP153 (By similarity). Interacts with host PDZD8; this interaction stabilizes the capsid (By similarity). Interacts with monkey TRIM5; this interaction destabilizes the capsid (By similarity).</text>
</comment>
<comment type="subunit">
    <molecule>Protease</molecule>
    <text evidence="5 7">Homodimer, whose active site consists of two apposed aspartic acid residues.</text>
</comment>
<comment type="subunit">
    <molecule>Reverse transcriptase/ribonuclease H</molecule>
    <text evidence="3">Heterodimer of p66 RT and p51 RT (RT p66/p51) (By similarity). Heterodimerization of RT is essential for DNA polymerase activity (By similarity). The overall folding of the subdomains is similar in p66 RT and p51 RT but the spatial arrangements of the subdomains are dramatically different (By similarity).</text>
</comment>
<comment type="subunit">
    <molecule>Integrase</molecule>
    <text evidence="4 5 7">Homotetramer; may further associate as a homohexadecamer (By similarity). Part of the pre-integration complex (PIC) which is composed of viral genome, matrix protein, Vpr and integrase. Interacts with human SMARCB1/INI1 and human PSIP1/LEDGF isoform 1. Interacts with human KPNA3; this interaction might play a role in nuclear import of the pre-integration complex (By similarity). Interacts with human NUP153; this interaction might play a role in nuclear import of the pre-integration complex (By similarity).</text>
</comment>
<comment type="subcellular location">
    <molecule>Gag-Pol polyprotein</molecule>
    <subcellularLocation>
        <location>Host cell membrane</location>
        <topology>Lipid-anchor</topology>
    </subcellularLocation>
    <subcellularLocation>
        <location>Host endosome</location>
        <location>Host multivesicular body</location>
    </subcellularLocation>
    <text evidence="7">These locations are linked to virus assembly sites. The main location is the cell membrane, but under some circumstances, late endosomal compartments can serve as productive sites for virion assembly.</text>
</comment>
<comment type="subcellular location">
    <molecule>Matrix protein p17</molecule>
    <subcellularLocation>
        <location>Virion membrane</location>
        <topology evidence="17">Lipid-anchor</topology>
    </subcellularLocation>
    <subcellularLocation>
        <location evidence="1">Host nucleus</location>
    </subcellularLocation>
    <subcellularLocation>
        <location evidence="1">Host cytoplasm</location>
    </subcellularLocation>
</comment>
<comment type="subcellular location">
    <molecule>Capsid protein p24</molecule>
    <subcellularLocation>
        <location evidence="17">Virion</location>
    </subcellularLocation>
</comment>
<comment type="subcellular location">
    <molecule>Nucleocapsid protein p7</molecule>
    <subcellularLocation>
        <location evidence="17">Virion</location>
    </subcellularLocation>
</comment>
<comment type="subcellular location">
    <molecule>Reverse transcriptase/ribonuclease H</molecule>
    <subcellularLocation>
        <location evidence="17">Virion</location>
    </subcellularLocation>
</comment>
<comment type="subcellular location">
    <molecule>Integrase</molecule>
    <subcellularLocation>
        <location evidence="17">Virion</location>
    </subcellularLocation>
    <subcellularLocation>
        <location evidence="17">Host nucleus</location>
    </subcellularLocation>
    <subcellularLocation>
        <location evidence="17">Host cytoplasm</location>
    </subcellularLocation>
    <text evidence="17">Nuclear at initial phase, cytoplasmic at assembly.</text>
</comment>
<comment type="alternative products">
    <event type="ribosomal frameshifting"/>
    <isoform>
        <id>P04588-1</id>
        <name>Gag-Pol polyprotein</name>
        <sequence type="displayed"/>
    </isoform>
    <isoform>
        <id>P04594-1</id>
        <name>Gag polyprotein</name>
        <sequence type="external"/>
    </isoform>
    <text>Translation results in the formation of the Gag polyprotein most of the time. Ribosomal frameshifting at the gag-pol genes boundary occurs at low frequency and produces the Gag-Pol polyprotein. This strategy of translation probably allows the virus to modulate the quantity of each viral protein. Maintenance of a correct Gag to Gag-Pol ratio is essential for RNA dimerization and viral infectivity.</text>
</comment>
<comment type="domain">
    <molecule>Reverse transcriptase/ribonuclease H</molecule>
    <text evidence="1">RT is structured in five subdomains: finger, palm, thumb, connection and RNase H. Within the palm subdomain, the 'primer grip' region is thought to be involved in the positioning of the primer terminus for accommodating the incoming nucleotide. The RNase H domain stabilizes the association of RT with primer-template.</text>
</comment>
<comment type="domain">
    <molecule>Reverse transcriptase/ribonuclease H</molecule>
    <text evidence="1">The tryptophan repeat motif is involved in RT p66/p51 dimerization (By similarity).</text>
</comment>
<comment type="domain">
    <molecule>Integrase</molecule>
    <text evidence="1">The core domain contains the D-x(n)-D-x(35)-E motif, named for the phylogenetically conserved glutamic acid and aspartic acid residues and the invariant 35 amino acid spacing between the second and third acidic residues. Each acidic residue of the D,D(35)E motif is independently essential for the 3'-processing and strand transfer activities of purified integrase protein.</text>
</comment>
<comment type="PTM">
    <molecule>Gag-Pol polyprotein</molecule>
    <text evidence="5 11">Specific enzymatic cleavages by the viral protease yield mature proteins. The protease is released by autocatalytic cleavage. The polyprotein is cleaved during and after budding, this process is termed maturation. Proteolytic cleavage of p66 RT removes the RNase H domain to yield the p51 RT subunit. Nucleocapsid protein p7 might be further cleaved after virus entry.</text>
</comment>
<comment type="PTM">
    <molecule>Matrix protein p17</molecule>
    <text evidence="5">Tyrosine phosphorylated presumably in the virion by a host kinase. Phosphorylation is apparently not a major regulator of membrane association.</text>
</comment>
<comment type="PTM">
    <molecule>Capsid protein p24</molecule>
    <text evidence="6">Phosphorylated possibly by host MAPK1; this phosphorylation is necessary for Pin1-mediated virion uncoating.</text>
</comment>
<comment type="PTM">
    <molecule>Nucleocapsid protein p7</molecule>
    <text evidence="2">Methylated by host PRMT6, impairing its function by reducing RNA annealing and the initiation of reverse transcription.</text>
</comment>
<comment type="miscellaneous">
    <molecule>Reverse transcriptase/ribonuclease H</molecule>
    <text evidence="1">Error-prone enzyme that lacks a proof-reading function. High mutations rate is a direct consequence of this characteristic. RT also displays frequent template switching leading to high recombination rate. Recombination mostly occurs between homologous regions of the two copackaged RNA genomes. If these two RNA molecules derive from different viral strains, reverse transcription will give rise to highly recombinated proviral DNAs.</text>
</comment>
<comment type="miscellaneous">
    <text>HIV-1 lineages are divided in three main groups, M (for Major), O (for Outlier), and N (for New, or Non-M, Non-O). The vast majority of strains found worldwide belong to the group M. Group O seems to be endemic to and largely confined to Cameroon and neighboring countries in West Central Africa, where these viruses represent a small minority of HIV-1 strains. The group N is represented by a limited number of isolates from Cameroonian persons. The group M is further subdivided in 9 clades or subtypes (A to D, F to H, J and K).</text>
</comment>
<comment type="miscellaneous">
    <text>Resistance to inhibitors associated with mutations are observed both in viral protease and in reverse transcriptase. Most of the time, single mutations confer only a modest reduction in drug susceptibility. Combination of several mutations is usually required to develop a high-level drug resistance. These mutations are predominantly found in clade B viruses and not in other genotypes. They are listed in the clade B representative isolate HXB2 (AC P04585).</text>
</comment>
<comment type="miscellaneous">
    <molecule>Isoform Gag-Pol polyprotein</molecule>
    <text>Produced by -1 ribosomal frameshifting.</text>
</comment>
<comment type="online information" name="HIV drug resistance mutations">
    <link uri="https://www.iasusa.org/hiv-drug-resistance/hiv-drug-resistance-mutations/"/>
</comment>
<comment type="online information" name="hivdb">
    <link uri="https://hivdb.stanford.edu"/>
    <text>HIV drug resistance database</text>
</comment>
<gene>
    <name type="primary">gag-pol</name>
</gene>
<keyword id="KW-0002">3D-structure</keyword>
<keyword id="KW-1073">Activation of host caspases by virus</keyword>
<keyword id="KW-0014">AIDS</keyword>
<keyword id="KW-0064">Aspartyl protease</keyword>
<keyword id="KW-0167">Capsid protein</keyword>
<keyword id="KW-0229">DNA integration</keyword>
<keyword id="KW-0233">DNA recombination</keyword>
<keyword id="KW-0238">DNA-binding</keyword>
<keyword id="KW-0239">DNA-directed DNA polymerase</keyword>
<keyword id="KW-0255">Endonuclease</keyword>
<keyword id="KW-1262">Eukaryotic host gene expression shutoff by virus</keyword>
<keyword id="KW-1193">Eukaryotic host translation shutoff by virus</keyword>
<keyword id="KW-1032">Host cell membrane</keyword>
<keyword id="KW-1035">Host cytoplasm</keyword>
<keyword id="KW-1039">Host endosome</keyword>
<keyword id="KW-1190">Host gene expression shutoff by virus</keyword>
<keyword id="KW-1043">Host membrane</keyword>
<keyword id="KW-1048">Host nucleus</keyword>
<keyword id="KW-0945">Host-virus interaction</keyword>
<keyword id="KW-0378">Hydrolase</keyword>
<keyword id="KW-0446">Lipid-binding</keyword>
<keyword id="KW-0449">Lipoprotein</keyword>
<keyword id="KW-0460">Magnesium</keyword>
<keyword id="KW-0472">Membrane</keyword>
<keyword id="KW-0479">Metal-binding</keyword>
<keyword id="KW-1119">Modulation of host cell apoptosis by virus</keyword>
<keyword id="KW-0511">Multifunctional enzyme</keyword>
<keyword id="KW-0519">Myristate</keyword>
<keyword id="KW-0540">Nuclease</keyword>
<keyword id="KW-0548">Nucleotidyltransferase</keyword>
<keyword id="KW-0597">Phosphoprotein</keyword>
<keyword id="KW-0645">Protease</keyword>
<keyword id="KW-1185">Reference proteome</keyword>
<keyword id="KW-0677">Repeat</keyword>
<keyword id="KW-0688">Ribosomal frameshifting</keyword>
<keyword id="KW-0694">RNA-binding</keyword>
<keyword id="KW-0695">RNA-directed DNA polymerase</keyword>
<keyword id="KW-0808">Transferase</keyword>
<keyword id="KW-1179">Viral genome integration</keyword>
<keyword id="KW-0543">Viral nucleoprotein</keyword>
<keyword id="KW-1163">Viral penetration into host nucleus</keyword>
<keyword id="KW-1188">Viral release from host cell</keyword>
<keyword id="KW-0946">Virion</keyword>
<keyword id="KW-0917">Virion maturation</keyword>
<keyword id="KW-1160">Virus entry into host cell</keyword>
<keyword id="KW-0862">Zinc</keyword>
<keyword id="KW-0863">Zinc-finger</keyword>
<reference key="1">
    <citation type="journal article" date="1986" name="Cell">
        <title>Genetic variability of the AIDS virus: nucleotide sequence analysis of two isolates from African patients.</title>
        <authorList>
            <person name="Alizon M."/>
            <person name="Wain-Hobson S."/>
            <person name="Montagnier L."/>
            <person name="Sonigo P."/>
        </authorList>
    </citation>
    <scope>NUCLEOTIDE SEQUENCE [GENOMIC RNA]</scope>
</reference>
<reference key="2">
    <citation type="journal article" date="1996" name="Curr. Top. Microbiol. Immunol.">
        <title>Proteolytic processing and particle maturation.</title>
        <authorList>
            <person name="Vogt V.M."/>
        </authorList>
    </citation>
    <scope>REVIEW</scope>
</reference>
<reference key="3">
    <citation type="journal article" date="1999" name="J. Mol. Biol.">
        <title>Structural biology of HIV.</title>
        <authorList>
            <person name="Turner B.G."/>
            <person name="Summers M.F."/>
        </authorList>
    </citation>
    <scope>REVIEW</scope>
</reference>
<reference key="4">
    <citation type="journal article" date="2001" name="Annu. Rev. Genet.">
        <title>Mechanisms of retroviral recombination.</title>
        <authorList>
            <person name="Negroni M."/>
            <person name="Buc H."/>
        </authorList>
    </citation>
    <scope>REVIEW</scope>
</reference>
<reference key="5">
    <citation type="journal article" date="2002" name="Genome Biol.">
        <title>Retroviral proteases.</title>
        <authorList>
            <person name="Dunn B.M."/>
            <person name="Goodenow M.M."/>
            <person name="Gustchina A."/>
            <person name="Wlodawer A."/>
        </authorList>
    </citation>
    <scope>REVIEW</scope>
</reference>
<reference key="6">
    <citation type="journal article" date="2003" name="Biochim. Biophys. Acta">
        <title>Role of HIV-1 Gag domains in viral assembly.</title>
        <authorList>
            <person name="Scarlata S."/>
            <person name="Carter C."/>
        </authorList>
    </citation>
    <scope>REVIEW</scope>
</reference>